<protein>
    <recommendedName>
        <fullName evidence="1">Segregation and condensation protein A</fullName>
    </recommendedName>
</protein>
<evidence type="ECO:0000255" key="1">
    <source>
        <dbReference type="HAMAP-Rule" id="MF_01805"/>
    </source>
</evidence>
<sequence length="242" mass="28270">MDIKLKDFEGPLDLLLHLVSKYQMDIYDVPITEVIEQYLAYVSTLQAMRLEVTGEYMVMASQLMLIKSRKLLPKVAEVTDLGDDLEQDLLSQIEEYRKFKLLGEHLEAKHQERAQYYSKAPTELIYEDAELVHDKTTIDLFLAFSNILAKKKEEFAQNHTTILRDEYKIEDMMIIVKESLIGRDQLRLQDLFKEAQNVQEVITLFLATLELIKTQELILVQEESFGDIYLMEKKEESQVPQS</sequence>
<name>SCPA_STRR6</name>
<reference key="1">
    <citation type="journal article" date="2002" name="J. Mol. Microbiol. Biotechnol.">
        <title>A XerD recombinase with unusual active site motifs in Streptococcus pneumoniae.</title>
        <authorList>
            <person name="Reichmann P."/>
            <person name="Hakenbeck R."/>
        </authorList>
    </citation>
    <scope>NUCLEOTIDE SEQUENCE [GENOMIC DNA]</scope>
</reference>
<reference key="2">
    <citation type="journal article" date="2001" name="J. Bacteriol.">
        <title>Genome of the bacterium Streptococcus pneumoniae strain R6.</title>
        <authorList>
            <person name="Hoskins J."/>
            <person name="Alborn W.E. Jr."/>
            <person name="Arnold J."/>
            <person name="Blaszczak L.C."/>
            <person name="Burgett S."/>
            <person name="DeHoff B.S."/>
            <person name="Estrem S.T."/>
            <person name="Fritz L."/>
            <person name="Fu D.-J."/>
            <person name="Fuller W."/>
            <person name="Geringer C."/>
            <person name="Gilmour R."/>
            <person name="Glass J.S."/>
            <person name="Khoja H."/>
            <person name="Kraft A.R."/>
            <person name="Lagace R.E."/>
            <person name="LeBlanc D.J."/>
            <person name="Lee L.N."/>
            <person name="Lefkowitz E.J."/>
            <person name="Lu J."/>
            <person name="Matsushima P."/>
            <person name="McAhren S.M."/>
            <person name="McHenney M."/>
            <person name="McLeaster K."/>
            <person name="Mundy C.W."/>
            <person name="Nicas T.I."/>
            <person name="Norris F.H."/>
            <person name="O'Gara M."/>
            <person name="Peery R.B."/>
            <person name="Robertson G.T."/>
            <person name="Rockey P."/>
            <person name="Sun P.-M."/>
            <person name="Winkler M.E."/>
            <person name="Yang Y."/>
            <person name="Young-Bellido M."/>
            <person name="Zhao G."/>
            <person name="Zook C.A."/>
            <person name="Baltz R.H."/>
            <person name="Jaskunas S.R."/>
            <person name="Rosteck P.R. Jr."/>
            <person name="Skatrud P.L."/>
            <person name="Glass J.I."/>
        </authorList>
    </citation>
    <scope>NUCLEOTIDE SEQUENCE [LARGE SCALE GENOMIC DNA]</scope>
    <source>
        <strain>ATCC BAA-255 / R6</strain>
    </source>
</reference>
<gene>
    <name evidence="1" type="primary">scpA</name>
    <name type="ordered locus">spr1691</name>
</gene>
<feature type="chain" id="PRO_0000211115" description="Segregation and condensation protein A">
    <location>
        <begin position="1"/>
        <end position="242"/>
    </location>
</feature>
<organism>
    <name type="scientific">Streptococcus pneumoniae (strain ATCC BAA-255 / R6)</name>
    <dbReference type="NCBI Taxonomy" id="171101"/>
    <lineage>
        <taxon>Bacteria</taxon>
        <taxon>Bacillati</taxon>
        <taxon>Bacillota</taxon>
        <taxon>Bacilli</taxon>
        <taxon>Lactobacillales</taxon>
        <taxon>Streptococcaceae</taxon>
        <taxon>Streptococcus</taxon>
    </lineage>
</organism>
<accession>Q9EUQ7</accession>
<comment type="function">
    <text evidence="1">Participates in chromosomal partition during cell division. May act via the formation of a condensin-like complex containing Smc and ScpB that pull DNA away from mid-cell into both cell halves.</text>
</comment>
<comment type="subunit">
    <text evidence="1">Component of a cohesin-like complex composed of ScpA, ScpB and the Smc homodimer, in which ScpA and ScpB bind to the head domain of Smc. The presence of the three proteins is required for the association of the complex with DNA.</text>
</comment>
<comment type="interaction">
    <interactant intactId="EBI-16033375">
        <id>Q9EUQ7</id>
    </interactant>
    <interactant intactId="EBI-16033389">
        <id>Q8DNI9</id>
        <label>scpB</label>
    </interactant>
    <organismsDiffer>false</organismsDiffer>
    <experiments>4</experiments>
</comment>
<comment type="subcellular location">
    <subcellularLocation>
        <location evidence="1">Cytoplasm</location>
    </subcellularLocation>
    <text evidence="1">Associated with two foci at the outer edges of the nucleoid region in young cells, and at four foci within both cell halves in older cells.</text>
</comment>
<comment type="similarity">
    <text evidence="1">Belongs to the ScpA family.</text>
</comment>
<keyword id="KW-0131">Cell cycle</keyword>
<keyword id="KW-0132">Cell division</keyword>
<keyword id="KW-0159">Chromosome partition</keyword>
<keyword id="KW-0963">Cytoplasm</keyword>
<keyword id="KW-1185">Reference proteome</keyword>
<dbReference type="EMBL" id="AJ277766">
    <property type="protein sequence ID" value="CAC19449.1"/>
    <property type="molecule type" value="Genomic_DNA"/>
</dbReference>
<dbReference type="EMBL" id="AE007317">
    <property type="protein sequence ID" value="AAL00494.1"/>
    <property type="molecule type" value="Genomic_DNA"/>
</dbReference>
<dbReference type="PIR" id="A98083">
    <property type="entry name" value="A98083"/>
</dbReference>
<dbReference type="RefSeq" id="NP_359283.1">
    <property type="nucleotide sequence ID" value="NC_003098.1"/>
</dbReference>
<dbReference type="RefSeq" id="WP_000351907.1">
    <property type="nucleotide sequence ID" value="NC_003098.1"/>
</dbReference>
<dbReference type="SMR" id="Q9EUQ7"/>
<dbReference type="DIP" id="DIP-60233N"/>
<dbReference type="IntAct" id="Q9EUQ7">
    <property type="interactions" value="1"/>
</dbReference>
<dbReference type="STRING" id="171101.spr1691"/>
<dbReference type="KEGG" id="spr:spr1691"/>
<dbReference type="PATRIC" id="fig|171101.6.peg.1829"/>
<dbReference type="eggNOG" id="COG1354">
    <property type="taxonomic scope" value="Bacteria"/>
</dbReference>
<dbReference type="HOGENOM" id="CLU_038686_3_3_9"/>
<dbReference type="Proteomes" id="UP000000586">
    <property type="component" value="Chromosome"/>
</dbReference>
<dbReference type="GO" id="GO:0005737">
    <property type="term" value="C:cytoplasm"/>
    <property type="evidence" value="ECO:0007669"/>
    <property type="project" value="UniProtKB-SubCell"/>
</dbReference>
<dbReference type="GO" id="GO:0051301">
    <property type="term" value="P:cell division"/>
    <property type="evidence" value="ECO:0007669"/>
    <property type="project" value="UniProtKB-KW"/>
</dbReference>
<dbReference type="GO" id="GO:0007059">
    <property type="term" value="P:chromosome segregation"/>
    <property type="evidence" value="ECO:0007669"/>
    <property type="project" value="UniProtKB-UniRule"/>
</dbReference>
<dbReference type="GO" id="GO:0006260">
    <property type="term" value="P:DNA replication"/>
    <property type="evidence" value="ECO:0007669"/>
    <property type="project" value="UniProtKB-UniRule"/>
</dbReference>
<dbReference type="Gene3D" id="6.10.250.2410">
    <property type="match status" value="1"/>
</dbReference>
<dbReference type="Gene3D" id="1.10.10.580">
    <property type="entry name" value="Structural maintenance of chromosome 1. Chain E"/>
    <property type="match status" value="1"/>
</dbReference>
<dbReference type="HAMAP" id="MF_01805">
    <property type="entry name" value="ScpA"/>
    <property type="match status" value="1"/>
</dbReference>
<dbReference type="InterPro" id="IPR003768">
    <property type="entry name" value="ScpA"/>
</dbReference>
<dbReference type="InterPro" id="IPR023093">
    <property type="entry name" value="ScpA-like_C"/>
</dbReference>
<dbReference type="NCBIfam" id="NF000993">
    <property type="entry name" value="PRK00104.1-2"/>
    <property type="match status" value="1"/>
</dbReference>
<dbReference type="PANTHER" id="PTHR33969">
    <property type="entry name" value="SEGREGATION AND CONDENSATION PROTEIN A"/>
    <property type="match status" value="1"/>
</dbReference>
<dbReference type="PANTHER" id="PTHR33969:SF2">
    <property type="entry name" value="SEGREGATION AND CONDENSATION PROTEIN A"/>
    <property type="match status" value="1"/>
</dbReference>
<dbReference type="Pfam" id="PF02616">
    <property type="entry name" value="SMC_ScpA"/>
    <property type="match status" value="1"/>
</dbReference>
<proteinExistence type="evidence at protein level"/>